<feature type="chain" id="PRO_1000211885" description="Nitrogenase iron protein">
    <location>
        <begin position="1"/>
        <end position="291"/>
    </location>
</feature>
<feature type="binding site" evidence="1">
    <location>
        <begin position="11"/>
        <end position="18"/>
    </location>
    <ligand>
        <name>ATP</name>
        <dbReference type="ChEBI" id="CHEBI:30616"/>
    </ligand>
</feature>
<feature type="binding site" evidence="1">
    <location>
        <position position="99"/>
    </location>
    <ligand>
        <name>[4Fe-4S] cluster</name>
        <dbReference type="ChEBI" id="CHEBI:49883"/>
        <note>ligand shared between dimeric partners</note>
    </ligand>
</feature>
<feature type="binding site" evidence="1">
    <location>
        <position position="133"/>
    </location>
    <ligand>
        <name>[4Fe-4S] cluster</name>
        <dbReference type="ChEBI" id="CHEBI:49883"/>
        <note>ligand shared between dimeric partners</note>
    </ligand>
</feature>
<feature type="modified residue" description="ADP-ribosylarginine; by dinitrogenase reductase ADP-ribosyltransferase" evidence="1">
    <location>
        <position position="102"/>
    </location>
</feature>
<sequence length="291" mass="31529">MGKLRQIAFYGKGGIGKSTTSQNTLAALVEMGQKILIVGCDPKADSTRLILNTKLQDTVLHLAAEAGSVEDLELEDVVKIGYKGIKCTEAGGPEPGVGCAGRGVITAINFLEENGAYDDVDYVSYDVLGDVVCGGFAMPIRENKAQEIYIVMSGEMMALYAANNIAKGILKYANSGGVRLGGLICNERKTDRELELAEALAARLGCKMIHFVPRDNIVQHAELRRETVIQYAPESKQAQEYRELARKIHENSGKGVIPTPITMEELEEMLMDFGIMQSEEDRLAAIAAAEA</sequence>
<organism>
    <name type="scientific">Cereibacter sphaeroides (strain ATCC 17029 / ATH 2.4.9)</name>
    <name type="common">Rhodobacter sphaeroides</name>
    <dbReference type="NCBI Taxonomy" id="349101"/>
    <lineage>
        <taxon>Bacteria</taxon>
        <taxon>Pseudomonadati</taxon>
        <taxon>Pseudomonadota</taxon>
        <taxon>Alphaproteobacteria</taxon>
        <taxon>Rhodobacterales</taxon>
        <taxon>Paracoccaceae</taxon>
        <taxon>Cereibacter</taxon>
    </lineage>
</organism>
<gene>
    <name evidence="1" type="primary">nifH</name>
    <name type="ordered locus">Rsph17029_2192</name>
</gene>
<dbReference type="EC" id="1.18.6.1" evidence="1"/>
<dbReference type="EMBL" id="CP000577">
    <property type="protein sequence ID" value="ABN77295.1"/>
    <property type="molecule type" value="Genomic_DNA"/>
</dbReference>
<dbReference type="RefSeq" id="WP_002720705.1">
    <property type="nucleotide sequence ID" value="NC_009049.1"/>
</dbReference>
<dbReference type="SMR" id="A3PLS9"/>
<dbReference type="GeneID" id="67447273"/>
<dbReference type="KEGG" id="rsh:Rsph17029_2192"/>
<dbReference type="HOGENOM" id="CLU_059373_0_0_5"/>
<dbReference type="GO" id="GO:0051539">
    <property type="term" value="F:4 iron, 4 sulfur cluster binding"/>
    <property type="evidence" value="ECO:0007669"/>
    <property type="project" value="UniProtKB-KW"/>
</dbReference>
<dbReference type="GO" id="GO:0005524">
    <property type="term" value="F:ATP binding"/>
    <property type="evidence" value="ECO:0007669"/>
    <property type="project" value="UniProtKB-UniRule"/>
</dbReference>
<dbReference type="GO" id="GO:0046872">
    <property type="term" value="F:metal ion binding"/>
    <property type="evidence" value="ECO:0007669"/>
    <property type="project" value="UniProtKB-KW"/>
</dbReference>
<dbReference type="GO" id="GO:0016163">
    <property type="term" value="F:nitrogenase activity"/>
    <property type="evidence" value="ECO:0007669"/>
    <property type="project" value="UniProtKB-UniRule"/>
</dbReference>
<dbReference type="GO" id="GO:0009399">
    <property type="term" value="P:nitrogen fixation"/>
    <property type="evidence" value="ECO:0007669"/>
    <property type="project" value="UniProtKB-UniRule"/>
</dbReference>
<dbReference type="CDD" id="cd02040">
    <property type="entry name" value="NifH"/>
    <property type="match status" value="1"/>
</dbReference>
<dbReference type="FunFam" id="3.40.50.300:FF:001379">
    <property type="entry name" value="Nitrogenase iron protein 1"/>
    <property type="match status" value="1"/>
</dbReference>
<dbReference type="Gene3D" id="3.40.50.300">
    <property type="entry name" value="P-loop containing nucleotide triphosphate hydrolases"/>
    <property type="match status" value="1"/>
</dbReference>
<dbReference type="HAMAP" id="MF_00533">
    <property type="entry name" value="NifH"/>
    <property type="match status" value="1"/>
</dbReference>
<dbReference type="InterPro" id="IPR030655">
    <property type="entry name" value="NifH/chlL_CS"/>
</dbReference>
<dbReference type="InterPro" id="IPR000392">
    <property type="entry name" value="NifH/frxC"/>
</dbReference>
<dbReference type="InterPro" id="IPR005977">
    <property type="entry name" value="Nitrogenase_Fe_NifH"/>
</dbReference>
<dbReference type="InterPro" id="IPR027417">
    <property type="entry name" value="P-loop_NTPase"/>
</dbReference>
<dbReference type="NCBIfam" id="TIGR01287">
    <property type="entry name" value="nifH"/>
    <property type="match status" value="1"/>
</dbReference>
<dbReference type="PANTHER" id="PTHR42864">
    <property type="entry name" value="LIGHT-INDEPENDENT PROTOCHLOROPHYLLIDE REDUCTASE IRON-SULFUR ATP-BINDING PROTEIN"/>
    <property type="match status" value="1"/>
</dbReference>
<dbReference type="PANTHER" id="PTHR42864:SF2">
    <property type="entry name" value="LIGHT-INDEPENDENT PROTOCHLOROPHYLLIDE REDUCTASE IRON-SULFUR ATP-BINDING PROTEIN"/>
    <property type="match status" value="1"/>
</dbReference>
<dbReference type="Pfam" id="PF00142">
    <property type="entry name" value="Fer4_NifH"/>
    <property type="match status" value="1"/>
</dbReference>
<dbReference type="PIRSF" id="PIRSF000363">
    <property type="entry name" value="Nitrogenase_iron"/>
    <property type="match status" value="1"/>
</dbReference>
<dbReference type="PRINTS" id="PR00091">
    <property type="entry name" value="NITROGNASEII"/>
</dbReference>
<dbReference type="SUPFAM" id="SSF52540">
    <property type="entry name" value="P-loop containing nucleoside triphosphate hydrolases"/>
    <property type="match status" value="1"/>
</dbReference>
<dbReference type="PROSITE" id="PS00746">
    <property type="entry name" value="NIFH_FRXC_1"/>
    <property type="match status" value="1"/>
</dbReference>
<dbReference type="PROSITE" id="PS00692">
    <property type="entry name" value="NIFH_FRXC_2"/>
    <property type="match status" value="1"/>
</dbReference>
<dbReference type="PROSITE" id="PS51026">
    <property type="entry name" value="NIFH_FRXC_3"/>
    <property type="match status" value="1"/>
</dbReference>
<accession>A3PLS9</accession>
<comment type="function">
    <text evidence="1">The key enzymatic reactions in nitrogen fixation are catalyzed by the nitrogenase complex, which has 2 components: the iron protein and the molybdenum-iron protein.</text>
</comment>
<comment type="catalytic activity">
    <reaction evidence="1">
        <text>N2 + 8 reduced [2Fe-2S]-[ferredoxin] + 16 ATP + 16 H2O = H2 + 8 oxidized [2Fe-2S]-[ferredoxin] + 2 NH4(+) + 16 ADP + 16 phosphate + 6 H(+)</text>
        <dbReference type="Rhea" id="RHEA:21448"/>
        <dbReference type="Rhea" id="RHEA-COMP:10000"/>
        <dbReference type="Rhea" id="RHEA-COMP:10001"/>
        <dbReference type="ChEBI" id="CHEBI:15377"/>
        <dbReference type="ChEBI" id="CHEBI:15378"/>
        <dbReference type="ChEBI" id="CHEBI:17997"/>
        <dbReference type="ChEBI" id="CHEBI:18276"/>
        <dbReference type="ChEBI" id="CHEBI:28938"/>
        <dbReference type="ChEBI" id="CHEBI:30616"/>
        <dbReference type="ChEBI" id="CHEBI:33737"/>
        <dbReference type="ChEBI" id="CHEBI:33738"/>
        <dbReference type="ChEBI" id="CHEBI:43474"/>
        <dbReference type="ChEBI" id="CHEBI:456216"/>
        <dbReference type="EC" id="1.18.6.1"/>
    </reaction>
</comment>
<comment type="cofactor">
    <cofactor evidence="1">
        <name>[4Fe-4S] cluster</name>
        <dbReference type="ChEBI" id="CHEBI:49883"/>
    </cofactor>
    <text evidence="1">Binds 1 [4Fe-4S] cluster per dimer.</text>
</comment>
<comment type="subunit">
    <text evidence="1">Homodimer.</text>
</comment>
<comment type="PTM">
    <text evidence="1">The reversible ADP-ribosylation of Arg-102 inactivates the nitrogenase reductase and regulates nitrogenase activity.</text>
</comment>
<comment type="similarity">
    <text evidence="1">Belongs to the NifH/BchL/ChlL family.</text>
</comment>
<reference key="1">
    <citation type="submission" date="2007-02" db="EMBL/GenBank/DDBJ databases">
        <title>Complete sequence of chromosome 1 of Rhodobacter sphaeroides ATCC 17029.</title>
        <authorList>
            <person name="Copeland A."/>
            <person name="Lucas S."/>
            <person name="Lapidus A."/>
            <person name="Barry K."/>
            <person name="Detter J.C."/>
            <person name="Glavina del Rio T."/>
            <person name="Hammon N."/>
            <person name="Israni S."/>
            <person name="Dalin E."/>
            <person name="Tice H."/>
            <person name="Pitluck S."/>
            <person name="Kiss H."/>
            <person name="Brettin T."/>
            <person name="Bruce D."/>
            <person name="Han C."/>
            <person name="Tapia R."/>
            <person name="Gilna P."/>
            <person name="Schmutz J."/>
            <person name="Larimer F."/>
            <person name="Land M."/>
            <person name="Hauser L."/>
            <person name="Kyrpides N."/>
            <person name="Mikhailova N."/>
            <person name="Richardson P."/>
            <person name="Mackenzie C."/>
            <person name="Choudhary M."/>
            <person name="Donohue T.J."/>
            <person name="Kaplan S."/>
        </authorList>
    </citation>
    <scope>NUCLEOTIDE SEQUENCE [LARGE SCALE GENOMIC DNA]</scope>
    <source>
        <strain>ATCC 17029 / ATH 2.4.9</strain>
    </source>
</reference>
<keyword id="KW-0004">4Fe-4S</keyword>
<keyword id="KW-0013">ADP-ribosylation</keyword>
<keyword id="KW-0067">ATP-binding</keyword>
<keyword id="KW-0408">Iron</keyword>
<keyword id="KW-0411">Iron-sulfur</keyword>
<keyword id="KW-0479">Metal-binding</keyword>
<keyword id="KW-0535">Nitrogen fixation</keyword>
<keyword id="KW-0547">Nucleotide-binding</keyword>
<keyword id="KW-0560">Oxidoreductase</keyword>
<evidence type="ECO:0000255" key="1">
    <source>
        <dbReference type="HAMAP-Rule" id="MF_00533"/>
    </source>
</evidence>
<protein>
    <recommendedName>
        <fullName evidence="1">Nitrogenase iron protein</fullName>
        <ecNumber evidence="1">1.18.6.1</ecNumber>
    </recommendedName>
    <alternativeName>
        <fullName evidence="1">Nitrogenase Fe protein</fullName>
    </alternativeName>
    <alternativeName>
        <fullName evidence="1">Nitrogenase component II</fullName>
    </alternativeName>
    <alternativeName>
        <fullName evidence="1">Nitrogenase reductase</fullName>
    </alternativeName>
</protein>
<name>NIFH_CERS1</name>
<proteinExistence type="inferred from homology"/>